<organism>
    <name type="scientific">Tapirus indicus</name>
    <name type="common">Asiatic tapir</name>
    <name type="synonym">Malayan tapir</name>
    <dbReference type="NCBI Taxonomy" id="9802"/>
    <lineage>
        <taxon>Eukaryota</taxon>
        <taxon>Metazoa</taxon>
        <taxon>Chordata</taxon>
        <taxon>Craniata</taxon>
        <taxon>Vertebrata</taxon>
        <taxon>Euteleostomi</taxon>
        <taxon>Mammalia</taxon>
        <taxon>Eutheria</taxon>
        <taxon>Laurasiatheria</taxon>
        <taxon>Perissodactyla</taxon>
        <taxon>Tapiridae</taxon>
        <taxon>Tapirus</taxon>
    </lineage>
</organism>
<feature type="signal peptide" evidence="3">
    <location>
        <begin position="1"/>
        <end position="18"/>
    </location>
</feature>
<feature type="chain" id="PRO_0000452910" description="Apolipoprotein E">
    <location>
        <begin position="19"/>
        <end position="310"/>
    </location>
</feature>
<feature type="repeat" description="1">
    <location>
        <begin position="77"/>
        <end position="98"/>
    </location>
</feature>
<feature type="repeat" description="2">
    <location>
        <begin position="99"/>
        <end position="120"/>
    </location>
</feature>
<feature type="repeat" description="3">
    <location>
        <begin position="121"/>
        <end position="142"/>
    </location>
</feature>
<feature type="repeat" description="4">
    <location>
        <begin position="143"/>
        <end position="164"/>
    </location>
</feature>
<feature type="repeat" description="5">
    <location>
        <begin position="165"/>
        <end position="186"/>
    </location>
</feature>
<feature type="repeat" description="6">
    <location>
        <begin position="187"/>
        <end position="204"/>
    </location>
</feature>
<feature type="repeat" description="7">
    <location>
        <begin position="205"/>
        <end position="226"/>
    </location>
</feature>
<feature type="repeat" description="8">
    <location>
        <begin position="227"/>
        <end position="248"/>
    </location>
</feature>
<feature type="region of interest" description="8 X 22 AA approximate tandem repeats">
    <location>
        <begin position="77"/>
        <end position="248"/>
    </location>
</feature>
<feature type="region of interest" description="LDL and other lipoprotein receptors binding" evidence="1">
    <location>
        <begin position="155"/>
        <end position="165"/>
    </location>
</feature>
<feature type="region of interest" description="Lipid-binding and lipoprotein association" evidence="1">
    <location>
        <begin position="203"/>
        <end position="283"/>
    </location>
</feature>
<feature type="region of interest" description="Homooligomerization" evidence="1">
    <location>
        <begin position="259"/>
        <end position="310"/>
    </location>
</feature>
<feature type="region of interest" description="Specificity for association with VLDL" evidence="1">
    <location>
        <begin position="271"/>
        <end position="283"/>
    </location>
</feature>
<feature type="binding site" evidence="1">
    <location>
        <begin position="159"/>
        <end position="162"/>
    </location>
    <ligand>
        <name>heparin</name>
        <dbReference type="ChEBI" id="CHEBI:28304"/>
    </ligand>
</feature>
<feature type="binding site" evidence="1">
    <location>
        <begin position="222"/>
        <end position="229"/>
    </location>
    <ligand>
        <name>heparin</name>
        <dbReference type="ChEBI" id="CHEBI:28304"/>
    </ligand>
</feature>
<feature type="modified residue" description="Methionine sulfoxide" evidence="2">
    <location>
        <position position="140"/>
    </location>
</feature>
<feature type="modified residue" description="Phosphoserine" evidence="1">
    <location>
        <position position="144"/>
    </location>
</feature>
<protein>
    <recommendedName>
        <fullName>Apolipoprotein E</fullName>
        <shortName>Apo-E</shortName>
    </recommendedName>
</protein>
<name>APOE_TAPIN</name>
<proteinExistence type="inferred from homology"/>
<comment type="function">
    <text evidence="1">APOE is an apolipoprotein, a protein associating with lipid particles, that mainly functions in lipoprotein-mediated lipid transport between organs via the plasma and interstitial fluids. APOE is a core component of plasma lipoproteins and is involved in their production, conversion and clearance. Apolipoproteins are amphipathic molecules that interact both with lipids of the lipoprotein particle core and the aqueous environment of the plasma. As such, APOE associates with chylomicrons, chylomicron remnants, very low density lipoproteins (VLDL) and intermediate density lipoproteins (IDL) but shows a preferential binding to high-density lipoproteins (HDL). It also binds a wide range of cellular receptors including the LDL receptor/LDLR, the LDL receptor-related proteins LRP1, LRP2 and LRP8 and the very low-density lipoprotein receptor/VLDLR that mediate the cellular uptake of the APOE-containing lipoprotein particles. Finally, APOE also has a heparin-binding activity and binds heparan-sulfate proteoglycans on the surface of cells, a property that supports the capture and the receptor-mediated uptake of APOE-containing lipoproteins by cells. A main function of APOE is to mediate lipoprotein clearance through the uptake of chylomicrons, VLDLs, and HDLs by hepatocytes. APOE is also involved in the biosynthesis by the liver of VLDLs as well as their uptake by peripheral tissues ensuring the delivery of triglycerides and energy storage in muscle, heart and adipose tissues. By participating in the lipoprotein-mediated distribution of lipids among tissues, APOE plays a critical role in plasma and tissues lipid homeostasis. APOE is also involved in two steps of reverse cholesterol transport, the HDLs-mediated transport of cholesterol from peripheral tissues to the liver, and thereby plays an important role in cholesterol homeostasis. First, it is functionally associated with ABCA1 in the biogenesis of HDLs in tissues. Second, it is enriched in circulating HDLs and mediates their uptake by hepatocytes. APOE also plays an important role in lipid transport in the central nervous system, regulating neuron survival and sprouting.</text>
</comment>
<comment type="subunit">
    <text evidence="1">Homotetramer. May interact with ABCA1; functionally associated with ABCA1 in the biogenesis of HDLs. May interact with APP/A4 amyloid-beta peptide; the interaction is extremely stable in vitro but its physiological significance is unclear. May interact with MAPT. May interact with MAP2. In the cerebrospinal fluid, interacts with secreted SORL1. Interacts with PMEL; this allows the loading of PMEL luminal fragment on ILVs to induce fibril nucleation.</text>
</comment>
<comment type="subcellular location">
    <subcellularLocation>
        <location evidence="1">Secreted</location>
    </subcellularLocation>
    <subcellularLocation>
        <location evidence="1">Secreted</location>
        <location evidence="1">Extracellular space</location>
    </subcellularLocation>
    <subcellularLocation>
        <location evidence="1">Secreted</location>
        <location evidence="1">Extracellular space</location>
        <location evidence="1">Extracellular matrix</location>
    </subcellularLocation>
    <subcellularLocation>
        <location evidence="1">Extracellular vesicle</location>
    </subcellularLocation>
    <subcellularLocation>
        <location evidence="1">Endosome</location>
        <location evidence="1">Multivesicular body</location>
    </subcellularLocation>
    <text evidence="1">In the plasma, APOE is associated with chylomicrons, chylomicrons remnants, VLDL, LDL and HDL lipoproteins. Lipid poor oligomeric APOE is associated with the extracellular matrix in a calcium- and heparan-sulfate proteoglycans-dependent manner. Lipidation induces the release from the extracellular matrix. Colocalizes with CD63 and PMEL at exosomes and in intraluminal vesicles within multivesicular endosomes.</text>
</comment>
<comment type="PTM">
    <text evidence="1">APOE exists as multiple glycosylated and sialylated glycoforms within cells and in plasma. The extent of glycosylation and sialylation are tissue and context specific.</text>
</comment>
<comment type="PTM">
    <text evidence="1">Glycated in plasma VLDL.</text>
</comment>
<comment type="PTM">
    <text evidence="1">Phosphorylated by FAM20C in the extracellular medium.</text>
</comment>
<comment type="similarity">
    <text evidence="4">Belongs to the apolipoprotein A1/A4/E family.</text>
</comment>
<sequence length="310" mass="35666">MKVLWAALVVTLLAGCQADVEREPEVQLGNEWAKWQAGQPWEQALGRFWNYLRWVQTLSDQVQEELLSTQATQELTVLIEETMKEVKTYKAELEQQLGPMAQETQARVSKELQAAQARLGADMEDVRNRLVQYRSELQAMMGQSTEELRGRLNSHLRKLRKRLLRDAEDLQKRLAVYQAGIREGAERSVNTLRERLGPLVEQAATVRSLVSKPLQERAEAWGQRLRGRLEKVGIQAGDRLDEVREQVQEVRAKVEEQANQMRLQAEAFHARLKSWFEPLVQDMQQRWAELVEKVQLAVGTSPTSESSEKQ</sequence>
<gene>
    <name type="primary">APOE</name>
</gene>
<accession>P0DUP7</accession>
<dbReference type="EMBL" id="PVIE01011221">
    <property type="status" value="NOT_ANNOTATED_CDS"/>
    <property type="molecule type" value="Genomic_DNA"/>
</dbReference>
<dbReference type="SMR" id="P0DUP7"/>
<dbReference type="GO" id="GO:0042627">
    <property type="term" value="C:chylomicron"/>
    <property type="evidence" value="ECO:0007669"/>
    <property type="project" value="UniProtKB-KW"/>
</dbReference>
<dbReference type="GO" id="GO:0070062">
    <property type="term" value="C:extracellular exosome"/>
    <property type="evidence" value="ECO:0000250"/>
    <property type="project" value="UniProtKB"/>
</dbReference>
<dbReference type="GO" id="GO:0034364">
    <property type="term" value="C:high-density lipoprotein particle"/>
    <property type="evidence" value="ECO:0007669"/>
    <property type="project" value="UniProtKB-KW"/>
</dbReference>
<dbReference type="GO" id="GO:0034362">
    <property type="term" value="C:low-density lipoprotein particle"/>
    <property type="evidence" value="ECO:0007669"/>
    <property type="project" value="TreeGrafter"/>
</dbReference>
<dbReference type="GO" id="GO:0097487">
    <property type="term" value="C:multivesicular body, internal vesicle"/>
    <property type="evidence" value="ECO:0000250"/>
    <property type="project" value="UniProtKB"/>
</dbReference>
<dbReference type="GO" id="GO:0034361">
    <property type="term" value="C:very-low-density lipoprotein particle"/>
    <property type="evidence" value="ECO:0007669"/>
    <property type="project" value="UniProtKB-KW"/>
</dbReference>
<dbReference type="GO" id="GO:0120020">
    <property type="term" value="F:cholesterol transfer activity"/>
    <property type="evidence" value="ECO:0007669"/>
    <property type="project" value="TreeGrafter"/>
</dbReference>
<dbReference type="GO" id="GO:0008201">
    <property type="term" value="F:heparin binding"/>
    <property type="evidence" value="ECO:0007669"/>
    <property type="project" value="UniProtKB-KW"/>
</dbReference>
<dbReference type="GO" id="GO:0060228">
    <property type="term" value="F:phosphatidylcholine-sterol O-acyltransferase activator activity"/>
    <property type="evidence" value="ECO:0007669"/>
    <property type="project" value="TreeGrafter"/>
</dbReference>
<dbReference type="GO" id="GO:0005543">
    <property type="term" value="F:phospholipid binding"/>
    <property type="evidence" value="ECO:0007669"/>
    <property type="project" value="TreeGrafter"/>
</dbReference>
<dbReference type="GO" id="GO:0055090">
    <property type="term" value="P:acylglycerol homeostasis"/>
    <property type="evidence" value="ECO:0007669"/>
    <property type="project" value="TreeGrafter"/>
</dbReference>
<dbReference type="GO" id="GO:0033344">
    <property type="term" value="P:cholesterol efflux"/>
    <property type="evidence" value="ECO:0007669"/>
    <property type="project" value="TreeGrafter"/>
</dbReference>
<dbReference type="GO" id="GO:0008203">
    <property type="term" value="P:cholesterol metabolic process"/>
    <property type="evidence" value="ECO:0007669"/>
    <property type="project" value="TreeGrafter"/>
</dbReference>
<dbReference type="GO" id="GO:0042157">
    <property type="term" value="P:lipoprotein metabolic process"/>
    <property type="evidence" value="ECO:0007669"/>
    <property type="project" value="InterPro"/>
</dbReference>
<dbReference type="GO" id="GO:0032438">
    <property type="term" value="P:melanosome organization"/>
    <property type="evidence" value="ECO:0000250"/>
    <property type="project" value="UniProtKB"/>
</dbReference>
<dbReference type="GO" id="GO:0033700">
    <property type="term" value="P:phospholipid efflux"/>
    <property type="evidence" value="ECO:0007669"/>
    <property type="project" value="TreeGrafter"/>
</dbReference>
<dbReference type="FunFam" id="1.20.120.20:FF:000002">
    <property type="entry name" value="Apolipoprotein E"/>
    <property type="match status" value="1"/>
</dbReference>
<dbReference type="FunFam" id="1.20.120.20:FF:000003">
    <property type="entry name" value="Apolipoprotein E"/>
    <property type="match status" value="1"/>
</dbReference>
<dbReference type="Gene3D" id="1.20.120.20">
    <property type="entry name" value="Apolipoprotein"/>
    <property type="match status" value="2"/>
</dbReference>
<dbReference type="InterPro" id="IPR000074">
    <property type="entry name" value="ApoA_E"/>
</dbReference>
<dbReference type="InterPro" id="IPR050163">
    <property type="entry name" value="Apolipoprotein_A1/A4/E"/>
</dbReference>
<dbReference type="PANTHER" id="PTHR18976">
    <property type="entry name" value="APOLIPOPROTEIN"/>
    <property type="match status" value="1"/>
</dbReference>
<dbReference type="PANTHER" id="PTHR18976:SF2">
    <property type="entry name" value="APOLIPOPROTEIN E"/>
    <property type="match status" value="1"/>
</dbReference>
<dbReference type="Pfam" id="PF01442">
    <property type="entry name" value="Apolipoprotein"/>
    <property type="match status" value="1"/>
</dbReference>
<dbReference type="SUPFAM" id="SSF58113">
    <property type="entry name" value="Apolipoprotein A-I"/>
    <property type="match status" value="1"/>
</dbReference>
<reference key="1">
    <citation type="submission" date="2018-02" db="EMBL/GenBank/DDBJ databases">
        <title>The 200 mammals project: sequencing genomes by a novel cost-effective method, yielding a high resolution annotation of the human genome.</title>
        <authorList>
            <person name="Johnson J."/>
            <person name="Muren E."/>
            <person name="Swofford R."/>
            <person name="Turner-Maier J."/>
            <person name="Marinescu V.D."/>
            <person name="Genereux D.P."/>
            <person name="Alfoldi J."/>
            <person name="Birren B."/>
            <person name="Karlsson E.K."/>
            <person name="Lindblad-Toh K."/>
        </authorList>
    </citation>
    <scope>NUCLEOTIDE SEQUENCE [LARGE SCALE GENOMIC DNA]</scope>
</reference>
<reference key="2">
    <citation type="unpublished observations" date="2021-03">
        <authorList>
            <person name="Puppione D.L."/>
        </authorList>
    </citation>
    <scope>IDENTIFICATION</scope>
</reference>
<keyword id="KW-0162">Chylomicron</keyword>
<keyword id="KW-0967">Endosome</keyword>
<keyword id="KW-0272">Extracellular matrix</keyword>
<keyword id="KW-0325">Glycoprotein</keyword>
<keyword id="KW-0345">HDL</keyword>
<keyword id="KW-0358">Heparin-binding</keyword>
<keyword id="KW-0445">Lipid transport</keyword>
<keyword id="KW-0446">Lipid-binding</keyword>
<keyword id="KW-0558">Oxidation</keyword>
<keyword id="KW-0597">Phosphoprotein</keyword>
<keyword id="KW-0677">Repeat</keyword>
<keyword id="KW-0964">Secreted</keyword>
<keyword id="KW-0732">Signal</keyword>
<keyword id="KW-0813">Transport</keyword>
<keyword id="KW-0850">VLDL</keyword>
<evidence type="ECO:0000250" key="1">
    <source>
        <dbReference type="UniProtKB" id="P02649"/>
    </source>
</evidence>
<evidence type="ECO:0000250" key="2">
    <source>
        <dbReference type="UniProtKB" id="P08226"/>
    </source>
</evidence>
<evidence type="ECO:0000255" key="3"/>
<evidence type="ECO:0000305" key="4"/>